<reference key="1">
    <citation type="journal article" date="2005" name="Nature">
        <title>The genome of the social amoeba Dictyostelium discoideum.</title>
        <authorList>
            <person name="Eichinger L."/>
            <person name="Pachebat J.A."/>
            <person name="Gloeckner G."/>
            <person name="Rajandream M.A."/>
            <person name="Sucgang R."/>
            <person name="Berriman M."/>
            <person name="Song J."/>
            <person name="Olsen R."/>
            <person name="Szafranski K."/>
            <person name="Xu Q."/>
            <person name="Tunggal B."/>
            <person name="Kummerfeld S."/>
            <person name="Madera M."/>
            <person name="Konfortov B.A."/>
            <person name="Rivero F."/>
            <person name="Bankier A.T."/>
            <person name="Lehmann R."/>
            <person name="Hamlin N."/>
            <person name="Davies R."/>
            <person name="Gaudet P."/>
            <person name="Fey P."/>
            <person name="Pilcher K."/>
            <person name="Chen G."/>
            <person name="Saunders D."/>
            <person name="Sodergren E.J."/>
            <person name="Davis P."/>
            <person name="Kerhornou A."/>
            <person name="Nie X."/>
            <person name="Hall N."/>
            <person name="Anjard C."/>
            <person name="Hemphill L."/>
            <person name="Bason N."/>
            <person name="Farbrother P."/>
            <person name="Desany B."/>
            <person name="Just E."/>
            <person name="Morio T."/>
            <person name="Rost R."/>
            <person name="Churcher C.M."/>
            <person name="Cooper J."/>
            <person name="Haydock S."/>
            <person name="van Driessche N."/>
            <person name="Cronin A."/>
            <person name="Goodhead I."/>
            <person name="Muzny D.M."/>
            <person name="Mourier T."/>
            <person name="Pain A."/>
            <person name="Lu M."/>
            <person name="Harper D."/>
            <person name="Lindsay R."/>
            <person name="Hauser H."/>
            <person name="James K.D."/>
            <person name="Quiles M."/>
            <person name="Madan Babu M."/>
            <person name="Saito T."/>
            <person name="Buchrieser C."/>
            <person name="Wardroper A."/>
            <person name="Felder M."/>
            <person name="Thangavelu M."/>
            <person name="Johnson D."/>
            <person name="Knights A."/>
            <person name="Loulseged H."/>
            <person name="Mungall K.L."/>
            <person name="Oliver K."/>
            <person name="Price C."/>
            <person name="Quail M.A."/>
            <person name="Urushihara H."/>
            <person name="Hernandez J."/>
            <person name="Rabbinowitsch E."/>
            <person name="Steffen D."/>
            <person name="Sanders M."/>
            <person name="Ma J."/>
            <person name="Kohara Y."/>
            <person name="Sharp S."/>
            <person name="Simmonds M.N."/>
            <person name="Spiegler S."/>
            <person name="Tivey A."/>
            <person name="Sugano S."/>
            <person name="White B."/>
            <person name="Walker D."/>
            <person name="Woodward J.R."/>
            <person name="Winckler T."/>
            <person name="Tanaka Y."/>
            <person name="Shaulsky G."/>
            <person name="Schleicher M."/>
            <person name="Weinstock G.M."/>
            <person name="Rosenthal A."/>
            <person name="Cox E.C."/>
            <person name="Chisholm R.L."/>
            <person name="Gibbs R.A."/>
            <person name="Loomis W.F."/>
            <person name="Platzer M."/>
            <person name="Kay R.R."/>
            <person name="Williams J.G."/>
            <person name="Dear P.H."/>
            <person name="Noegel A.A."/>
            <person name="Barrell B.G."/>
            <person name="Kuspa A."/>
        </authorList>
    </citation>
    <scope>NUCLEOTIDE SEQUENCE [LARGE SCALE GENOMIC DNA]</scope>
    <source>
        <strain>AX4</strain>
    </source>
</reference>
<reference key="2">
    <citation type="submission" date="2009-07" db="UniProtKB">
        <authorList>
            <person name="Bienvenut W.V."/>
            <person name="Ura S."/>
            <person name="Insall R.H."/>
        </authorList>
    </citation>
    <scope>PROTEIN SEQUENCE OF 102-113; 173-184; 190-227; 247-259 AND 327-348</scope>
    <scope>IDENTIFICATION BY MASS SPECTROMETRY</scope>
    <source>
        <strain>AX2</strain>
    </source>
</reference>
<evidence type="ECO:0000250" key="1"/>
<evidence type="ECO:0000255" key="2"/>
<evidence type="ECO:0000305" key="3"/>
<keyword id="KW-0067">ATP-binding</keyword>
<keyword id="KW-0963">Cytoplasm</keyword>
<keyword id="KW-0903">Direct protein sequencing</keyword>
<keyword id="KW-0547">Nucleotide-binding</keyword>
<keyword id="KW-0539">Nucleus</keyword>
<keyword id="KW-0647">Proteasome</keyword>
<keyword id="KW-1185">Reference proteome</keyword>
<protein>
    <recommendedName>
        <fullName>26S proteasome regulatory subunit 10B</fullName>
    </recommendedName>
    <alternativeName>
        <fullName>26S proteasome AAA-ATPase subunit RPT4</fullName>
    </alternativeName>
    <alternativeName>
        <fullName>Proteasome 26S subunit ATPase 6</fullName>
    </alternativeName>
</protein>
<accession>Q54PJ1</accession>
<name>PRS10_DICDI</name>
<feature type="chain" id="PRO_0000328104" description="26S proteasome regulatory subunit 10B">
    <location>
        <begin position="1"/>
        <end position="393"/>
    </location>
</feature>
<feature type="binding site" evidence="2">
    <location>
        <begin position="178"/>
        <end position="185"/>
    </location>
    <ligand>
        <name>ATP</name>
        <dbReference type="ChEBI" id="CHEBI:30616"/>
    </ligand>
</feature>
<organism>
    <name type="scientific">Dictyostelium discoideum</name>
    <name type="common">Social amoeba</name>
    <dbReference type="NCBI Taxonomy" id="44689"/>
    <lineage>
        <taxon>Eukaryota</taxon>
        <taxon>Amoebozoa</taxon>
        <taxon>Evosea</taxon>
        <taxon>Eumycetozoa</taxon>
        <taxon>Dictyostelia</taxon>
        <taxon>Dictyosteliales</taxon>
        <taxon>Dictyosteliaceae</taxon>
        <taxon>Dictyostelium</taxon>
    </lineage>
</organism>
<comment type="function">
    <text evidence="1">The 26S proteasome is involved in the ATP-dependent degradation of ubiquitinated proteins. The regulatory (or ATPase) complex confers ATP dependency and substrate specificity to the 26S complex (By similarity).</text>
</comment>
<comment type="subcellular location">
    <subcellularLocation>
        <location evidence="1">Cytoplasm</location>
    </subcellularLocation>
    <subcellularLocation>
        <location evidence="1">Nucleus</location>
    </subcellularLocation>
</comment>
<comment type="similarity">
    <text evidence="3">Belongs to the AAA ATPase family.</text>
</comment>
<dbReference type="EMBL" id="AAFI02000066">
    <property type="protein sequence ID" value="EAL65185.1"/>
    <property type="molecule type" value="Genomic_DNA"/>
</dbReference>
<dbReference type="RefSeq" id="XP_638541.1">
    <property type="nucleotide sequence ID" value="XM_633449.1"/>
</dbReference>
<dbReference type="SMR" id="Q54PJ1"/>
<dbReference type="FunCoup" id="Q54PJ1">
    <property type="interactions" value="704"/>
</dbReference>
<dbReference type="STRING" id="44689.Q54PJ1"/>
<dbReference type="PaxDb" id="44689-DDB0232968"/>
<dbReference type="EnsemblProtists" id="EAL65185">
    <property type="protein sequence ID" value="EAL65185"/>
    <property type="gene ID" value="DDB_G0284517"/>
</dbReference>
<dbReference type="GeneID" id="8624634"/>
<dbReference type="KEGG" id="ddi:DDB_G0284517"/>
<dbReference type="dictyBase" id="DDB_G0284517">
    <property type="gene designation" value="psmC6"/>
</dbReference>
<dbReference type="VEuPathDB" id="AmoebaDB:DDB_G0284517"/>
<dbReference type="eggNOG" id="KOG0651">
    <property type="taxonomic scope" value="Eukaryota"/>
</dbReference>
<dbReference type="HOGENOM" id="CLU_000688_2_2_1"/>
<dbReference type="InParanoid" id="Q54PJ1"/>
<dbReference type="OMA" id="DHEPCVI"/>
<dbReference type="PhylomeDB" id="Q54PJ1"/>
<dbReference type="Reactome" id="R-DDI-1236978">
    <property type="pathway name" value="Cross-presentation of soluble exogenous antigens (endosomes)"/>
</dbReference>
<dbReference type="Reactome" id="R-DDI-174084">
    <property type="pathway name" value="Autodegradation of Cdh1 by Cdh1:APC/C"/>
</dbReference>
<dbReference type="Reactome" id="R-DDI-174154">
    <property type="pathway name" value="APC/C:Cdc20 mediated degradation of Securin"/>
</dbReference>
<dbReference type="Reactome" id="R-DDI-174178">
    <property type="pathway name" value="APC/C:Cdh1 mediated degradation of Cdc20 and other APC/C:Cdh1 targeted proteins in late mitosis/early G1"/>
</dbReference>
<dbReference type="Reactome" id="R-DDI-2467813">
    <property type="pathway name" value="Separation of Sister Chromatids"/>
</dbReference>
<dbReference type="Reactome" id="R-DDI-349425">
    <property type="pathway name" value="Autodegradation of the E3 ubiquitin ligase COP1"/>
</dbReference>
<dbReference type="Reactome" id="R-DDI-382556">
    <property type="pathway name" value="ABC-family proteins mediated transport"/>
</dbReference>
<dbReference type="Reactome" id="R-DDI-450408">
    <property type="pathway name" value="AUF1 (hnRNP D0) binds and destabilizes mRNA"/>
</dbReference>
<dbReference type="Reactome" id="R-DDI-4641258">
    <property type="pathway name" value="Degradation of DVL"/>
</dbReference>
<dbReference type="Reactome" id="R-DDI-5632684">
    <property type="pathway name" value="Hedgehog 'on' state"/>
</dbReference>
<dbReference type="Reactome" id="R-DDI-5658442">
    <property type="pathway name" value="Regulation of RAS by GAPs"/>
</dbReference>
<dbReference type="Reactome" id="R-DDI-5687128">
    <property type="pathway name" value="MAPK6/MAPK4 signaling"/>
</dbReference>
<dbReference type="Reactome" id="R-DDI-5689603">
    <property type="pathway name" value="UCH proteinases"/>
</dbReference>
<dbReference type="Reactome" id="R-DDI-5689880">
    <property type="pathway name" value="Ub-specific processing proteases"/>
</dbReference>
<dbReference type="Reactome" id="R-DDI-68949">
    <property type="pathway name" value="Orc1 removal from chromatin"/>
</dbReference>
<dbReference type="Reactome" id="R-DDI-69017">
    <property type="pathway name" value="CDK-mediated phosphorylation and removal of Cdc6"/>
</dbReference>
<dbReference type="Reactome" id="R-DDI-69601">
    <property type="pathway name" value="Ubiquitin Mediated Degradation of Phosphorylated Cdc25A"/>
</dbReference>
<dbReference type="Reactome" id="R-DDI-8854050">
    <property type="pathway name" value="FBXL7 down-regulates AURKA during mitotic entry and in early mitosis"/>
</dbReference>
<dbReference type="Reactome" id="R-DDI-8948751">
    <property type="pathway name" value="Regulation of PTEN stability and activity"/>
</dbReference>
<dbReference type="Reactome" id="R-DDI-8951664">
    <property type="pathway name" value="Neddylation"/>
</dbReference>
<dbReference type="Reactome" id="R-DDI-9755511">
    <property type="pathway name" value="KEAP1-NFE2L2 pathway"/>
</dbReference>
<dbReference type="Reactome" id="R-DDI-983168">
    <property type="pathway name" value="Antigen processing: Ubiquitination &amp; Proteasome degradation"/>
</dbReference>
<dbReference type="Reactome" id="R-DDI-9907900">
    <property type="pathway name" value="Proteasome assembly"/>
</dbReference>
<dbReference type="PRO" id="PR:Q54PJ1"/>
<dbReference type="Proteomes" id="UP000002195">
    <property type="component" value="Chromosome 4"/>
</dbReference>
<dbReference type="GO" id="GO:0005737">
    <property type="term" value="C:cytoplasm"/>
    <property type="evidence" value="ECO:0007669"/>
    <property type="project" value="UniProtKB-SubCell"/>
</dbReference>
<dbReference type="GO" id="GO:0005634">
    <property type="term" value="C:nucleus"/>
    <property type="evidence" value="ECO:0007669"/>
    <property type="project" value="UniProtKB-SubCell"/>
</dbReference>
<dbReference type="GO" id="GO:0008540">
    <property type="term" value="C:proteasome regulatory particle, base subcomplex"/>
    <property type="evidence" value="ECO:0000318"/>
    <property type="project" value="GO_Central"/>
</dbReference>
<dbReference type="GO" id="GO:0005524">
    <property type="term" value="F:ATP binding"/>
    <property type="evidence" value="ECO:0007669"/>
    <property type="project" value="UniProtKB-KW"/>
</dbReference>
<dbReference type="GO" id="GO:0016887">
    <property type="term" value="F:ATP hydrolysis activity"/>
    <property type="evidence" value="ECO:0007669"/>
    <property type="project" value="InterPro"/>
</dbReference>
<dbReference type="GO" id="GO:0036402">
    <property type="term" value="F:proteasome-activating activity"/>
    <property type="evidence" value="ECO:0000318"/>
    <property type="project" value="GO_Central"/>
</dbReference>
<dbReference type="GO" id="GO:0036503">
    <property type="term" value="P:ERAD pathway"/>
    <property type="evidence" value="ECO:0000318"/>
    <property type="project" value="GO_Central"/>
</dbReference>
<dbReference type="GO" id="GO:0045899">
    <property type="term" value="P:positive regulation of RNA polymerase II transcription preinitiation complex assembly"/>
    <property type="evidence" value="ECO:0000318"/>
    <property type="project" value="GO_Central"/>
</dbReference>
<dbReference type="GO" id="GO:0043161">
    <property type="term" value="P:proteasome-mediated ubiquitin-dependent protein catabolic process"/>
    <property type="evidence" value="ECO:0000318"/>
    <property type="project" value="GO_Central"/>
</dbReference>
<dbReference type="FunFam" id="1.10.8.60:FF:000008">
    <property type="entry name" value="26S protease regulatory subunit 10B"/>
    <property type="match status" value="1"/>
</dbReference>
<dbReference type="FunFam" id="3.40.50.300:FF:000034">
    <property type="entry name" value="26S protease regulatory subunit 10B"/>
    <property type="match status" value="1"/>
</dbReference>
<dbReference type="Gene3D" id="1.10.8.60">
    <property type="match status" value="1"/>
</dbReference>
<dbReference type="Gene3D" id="2.40.50.140">
    <property type="entry name" value="Nucleic acid-binding proteins"/>
    <property type="match status" value="1"/>
</dbReference>
<dbReference type="Gene3D" id="3.40.50.300">
    <property type="entry name" value="P-loop containing nucleotide triphosphate hydrolases"/>
    <property type="match status" value="1"/>
</dbReference>
<dbReference type="InterPro" id="IPR050221">
    <property type="entry name" value="26S_Proteasome_ATPase"/>
</dbReference>
<dbReference type="InterPro" id="IPR003593">
    <property type="entry name" value="AAA+_ATPase"/>
</dbReference>
<dbReference type="InterPro" id="IPR041569">
    <property type="entry name" value="AAA_lid_3"/>
</dbReference>
<dbReference type="InterPro" id="IPR003959">
    <property type="entry name" value="ATPase_AAA_core"/>
</dbReference>
<dbReference type="InterPro" id="IPR003960">
    <property type="entry name" value="ATPase_AAA_CS"/>
</dbReference>
<dbReference type="InterPro" id="IPR012340">
    <property type="entry name" value="NA-bd_OB-fold"/>
</dbReference>
<dbReference type="InterPro" id="IPR027417">
    <property type="entry name" value="P-loop_NTPase"/>
</dbReference>
<dbReference type="InterPro" id="IPR032501">
    <property type="entry name" value="Prot_ATP_ID_OB_2nd"/>
</dbReference>
<dbReference type="PANTHER" id="PTHR23073">
    <property type="entry name" value="26S PROTEASOME REGULATORY SUBUNIT"/>
    <property type="match status" value="1"/>
</dbReference>
<dbReference type="Pfam" id="PF00004">
    <property type="entry name" value="AAA"/>
    <property type="match status" value="1"/>
</dbReference>
<dbReference type="Pfam" id="PF17862">
    <property type="entry name" value="AAA_lid_3"/>
    <property type="match status" value="1"/>
</dbReference>
<dbReference type="Pfam" id="PF16450">
    <property type="entry name" value="Prot_ATP_ID_OB_C"/>
    <property type="match status" value="1"/>
</dbReference>
<dbReference type="SMART" id="SM00382">
    <property type="entry name" value="AAA"/>
    <property type="match status" value="1"/>
</dbReference>
<dbReference type="SUPFAM" id="SSF52540">
    <property type="entry name" value="P-loop containing nucleoside triphosphate hydrolases"/>
    <property type="match status" value="1"/>
</dbReference>
<dbReference type="PROSITE" id="PS00674">
    <property type="entry name" value="AAA"/>
    <property type="match status" value="1"/>
</dbReference>
<gene>
    <name type="primary">psmC6</name>
    <name type="ORF">DDB_G0284517</name>
</gene>
<proteinExistence type="evidence at protein level"/>
<sequence length="393" mass="44275">MSTEETKKEQALQNYRDRLIEHKNAELRLNKAHELIKKLKKDFQKTEDHIKTIQYIGEIIGEVLRSLDEERFIVKACNGPRYVVRCANYQDKAHLLVPGARVTLDLTTLTILKILPREVDPIIFNMTAESPGSVSYGEIGGLSNQIRELREVVELPLMIPELFIRVGIKAPKGVLLYGPPGTGKTLLARAIASNLEANFLKVVSSAIVDKYIGESARVIREMFGYARDHQPCVIFMDEIDAIGGRRFSEGTSADREIQRTLMELLNQMDGFDTLSKVKIIMATNRPDVLDPALLRPGRLDRKIEIPLPNEAGRVDVLKIHAANITKHGDVDYEAIAKLADGFNAADLRNVCTEAGMFAIRAERDYVMEEDFMKAVRKCQEAKKLEGKLDYQKV</sequence>